<dbReference type="EMBL" id="AM286690">
    <property type="protein sequence ID" value="CAL15777.1"/>
    <property type="molecule type" value="Genomic_DNA"/>
</dbReference>
<dbReference type="RefSeq" id="WP_011587625.1">
    <property type="nucleotide sequence ID" value="NC_008260.1"/>
</dbReference>
<dbReference type="SMR" id="Q0VSS1"/>
<dbReference type="STRING" id="393595.ABO_0329"/>
<dbReference type="KEGG" id="abo:ABO_0329"/>
<dbReference type="eggNOG" id="COG0532">
    <property type="taxonomic scope" value="Bacteria"/>
</dbReference>
<dbReference type="HOGENOM" id="CLU_006301_6_3_6"/>
<dbReference type="OrthoDB" id="9811804at2"/>
<dbReference type="Proteomes" id="UP000008871">
    <property type="component" value="Chromosome"/>
</dbReference>
<dbReference type="GO" id="GO:0005829">
    <property type="term" value="C:cytosol"/>
    <property type="evidence" value="ECO:0007669"/>
    <property type="project" value="TreeGrafter"/>
</dbReference>
<dbReference type="GO" id="GO:0005525">
    <property type="term" value="F:GTP binding"/>
    <property type="evidence" value="ECO:0007669"/>
    <property type="project" value="UniProtKB-KW"/>
</dbReference>
<dbReference type="GO" id="GO:0003924">
    <property type="term" value="F:GTPase activity"/>
    <property type="evidence" value="ECO:0007669"/>
    <property type="project" value="UniProtKB-UniRule"/>
</dbReference>
<dbReference type="GO" id="GO:0003743">
    <property type="term" value="F:translation initiation factor activity"/>
    <property type="evidence" value="ECO:0007669"/>
    <property type="project" value="UniProtKB-UniRule"/>
</dbReference>
<dbReference type="CDD" id="cd01887">
    <property type="entry name" value="IF2_eIF5B"/>
    <property type="match status" value="1"/>
</dbReference>
<dbReference type="CDD" id="cd03702">
    <property type="entry name" value="IF2_mtIF2_II"/>
    <property type="match status" value="1"/>
</dbReference>
<dbReference type="CDD" id="cd03692">
    <property type="entry name" value="mtIF2_IVc"/>
    <property type="match status" value="1"/>
</dbReference>
<dbReference type="FunFam" id="2.40.30.10:FF:000007">
    <property type="entry name" value="Translation initiation factor IF-2"/>
    <property type="match status" value="1"/>
</dbReference>
<dbReference type="FunFam" id="2.40.30.10:FF:000008">
    <property type="entry name" value="Translation initiation factor IF-2"/>
    <property type="match status" value="1"/>
</dbReference>
<dbReference type="FunFam" id="3.40.50.10050:FF:000001">
    <property type="entry name" value="Translation initiation factor IF-2"/>
    <property type="match status" value="1"/>
</dbReference>
<dbReference type="FunFam" id="3.40.50.300:FF:000019">
    <property type="entry name" value="Translation initiation factor IF-2"/>
    <property type="match status" value="1"/>
</dbReference>
<dbReference type="Gene3D" id="3.40.50.300">
    <property type="entry name" value="P-loop containing nucleotide triphosphate hydrolases"/>
    <property type="match status" value="1"/>
</dbReference>
<dbReference type="Gene3D" id="3.30.56.50">
    <property type="entry name" value="Putative DNA-binding domain, N-terminal subdomain of bacterial translation initiation factor IF2"/>
    <property type="match status" value="1"/>
</dbReference>
<dbReference type="Gene3D" id="2.40.30.10">
    <property type="entry name" value="Translation factors"/>
    <property type="match status" value="2"/>
</dbReference>
<dbReference type="Gene3D" id="3.40.50.10050">
    <property type="entry name" value="Translation initiation factor IF- 2, domain 3"/>
    <property type="match status" value="1"/>
</dbReference>
<dbReference type="HAMAP" id="MF_00100_B">
    <property type="entry name" value="IF_2_B"/>
    <property type="match status" value="1"/>
</dbReference>
<dbReference type="InterPro" id="IPR009061">
    <property type="entry name" value="DNA-bd_dom_put_sf"/>
</dbReference>
<dbReference type="InterPro" id="IPR053905">
    <property type="entry name" value="EF-G-like_DII"/>
</dbReference>
<dbReference type="InterPro" id="IPR013575">
    <property type="entry name" value="IF2_assoc_dom_bac"/>
</dbReference>
<dbReference type="InterPro" id="IPR044145">
    <property type="entry name" value="IF2_II"/>
</dbReference>
<dbReference type="InterPro" id="IPR006847">
    <property type="entry name" value="IF2_N"/>
</dbReference>
<dbReference type="InterPro" id="IPR027417">
    <property type="entry name" value="P-loop_NTPase"/>
</dbReference>
<dbReference type="InterPro" id="IPR005225">
    <property type="entry name" value="Small_GTP-bd"/>
</dbReference>
<dbReference type="InterPro" id="IPR000795">
    <property type="entry name" value="T_Tr_GTP-bd_dom"/>
</dbReference>
<dbReference type="InterPro" id="IPR000178">
    <property type="entry name" value="TF_IF2_bacterial-like"/>
</dbReference>
<dbReference type="InterPro" id="IPR015760">
    <property type="entry name" value="TIF_IF2"/>
</dbReference>
<dbReference type="InterPro" id="IPR023115">
    <property type="entry name" value="TIF_IF2_dom3"/>
</dbReference>
<dbReference type="InterPro" id="IPR036925">
    <property type="entry name" value="TIF_IF2_dom3_sf"/>
</dbReference>
<dbReference type="InterPro" id="IPR009000">
    <property type="entry name" value="Transl_B-barrel_sf"/>
</dbReference>
<dbReference type="NCBIfam" id="TIGR00487">
    <property type="entry name" value="IF-2"/>
    <property type="match status" value="1"/>
</dbReference>
<dbReference type="NCBIfam" id="TIGR00231">
    <property type="entry name" value="small_GTP"/>
    <property type="match status" value="1"/>
</dbReference>
<dbReference type="PANTHER" id="PTHR43381:SF5">
    <property type="entry name" value="TR-TYPE G DOMAIN-CONTAINING PROTEIN"/>
    <property type="match status" value="1"/>
</dbReference>
<dbReference type="PANTHER" id="PTHR43381">
    <property type="entry name" value="TRANSLATION INITIATION FACTOR IF-2-RELATED"/>
    <property type="match status" value="1"/>
</dbReference>
<dbReference type="Pfam" id="PF22042">
    <property type="entry name" value="EF-G_D2"/>
    <property type="match status" value="1"/>
</dbReference>
<dbReference type="Pfam" id="PF00009">
    <property type="entry name" value="GTP_EFTU"/>
    <property type="match status" value="1"/>
</dbReference>
<dbReference type="Pfam" id="PF11987">
    <property type="entry name" value="IF-2"/>
    <property type="match status" value="1"/>
</dbReference>
<dbReference type="Pfam" id="PF08364">
    <property type="entry name" value="IF2_assoc"/>
    <property type="match status" value="1"/>
</dbReference>
<dbReference type="Pfam" id="PF04760">
    <property type="entry name" value="IF2_N"/>
    <property type="match status" value="2"/>
</dbReference>
<dbReference type="SUPFAM" id="SSF52156">
    <property type="entry name" value="Initiation factor IF2/eIF5b, domain 3"/>
    <property type="match status" value="1"/>
</dbReference>
<dbReference type="SUPFAM" id="SSF52540">
    <property type="entry name" value="P-loop containing nucleoside triphosphate hydrolases"/>
    <property type="match status" value="1"/>
</dbReference>
<dbReference type="SUPFAM" id="SSF46955">
    <property type="entry name" value="Putative DNA-binding domain"/>
    <property type="match status" value="1"/>
</dbReference>
<dbReference type="SUPFAM" id="SSF50447">
    <property type="entry name" value="Translation proteins"/>
    <property type="match status" value="2"/>
</dbReference>
<dbReference type="PROSITE" id="PS51722">
    <property type="entry name" value="G_TR_2"/>
    <property type="match status" value="1"/>
</dbReference>
<dbReference type="PROSITE" id="PS01176">
    <property type="entry name" value="IF2"/>
    <property type="match status" value="1"/>
</dbReference>
<feature type="chain" id="PRO_1000008193" description="Translation initiation factor IF-2">
    <location>
        <begin position="1"/>
        <end position="898"/>
    </location>
</feature>
<feature type="domain" description="tr-type G">
    <location>
        <begin position="398"/>
        <end position="567"/>
    </location>
</feature>
<feature type="region of interest" description="Disordered" evidence="3">
    <location>
        <begin position="51"/>
        <end position="70"/>
    </location>
</feature>
<feature type="region of interest" description="Disordered" evidence="3">
    <location>
        <begin position="114"/>
        <end position="303"/>
    </location>
</feature>
<feature type="region of interest" description="G1" evidence="1">
    <location>
        <begin position="407"/>
        <end position="414"/>
    </location>
</feature>
<feature type="region of interest" description="G2" evidence="1">
    <location>
        <begin position="432"/>
        <end position="436"/>
    </location>
</feature>
<feature type="region of interest" description="G3" evidence="1">
    <location>
        <begin position="453"/>
        <end position="456"/>
    </location>
</feature>
<feature type="region of interest" description="G4" evidence="1">
    <location>
        <begin position="507"/>
        <end position="510"/>
    </location>
</feature>
<feature type="region of interest" description="G5" evidence="1">
    <location>
        <begin position="543"/>
        <end position="545"/>
    </location>
</feature>
<feature type="compositionally biased region" description="Basic and acidic residues" evidence="3">
    <location>
        <begin position="114"/>
        <end position="171"/>
    </location>
</feature>
<feature type="compositionally biased region" description="Basic and acidic residues" evidence="3">
    <location>
        <begin position="184"/>
        <end position="258"/>
    </location>
</feature>
<feature type="binding site" evidence="2">
    <location>
        <begin position="407"/>
        <end position="414"/>
    </location>
    <ligand>
        <name>GTP</name>
        <dbReference type="ChEBI" id="CHEBI:37565"/>
    </ligand>
</feature>
<feature type="binding site" evidence="2">
    <location>
        <begin position="453"/>
        <end position="457"/>
    </location>
    <ligand>
        <name>GTP</name>
        <dbReference type="ChEBI" id="CHEBI:37565"/>
    </ligand>
</feature>
<feature type="binding site" evidence="2">
    <location>
        <begin position="507"/>
        <end position="510"/>
    </location>
    <ligand>
        <name>GTP</name>
        <dbReference type="ChEBI" id="CHEBI:37565"/>
    </ligand>
</feature>
<reference key="1">
    <citation type="journal article" date="2006" name="Nat. Biotechnol.">
        <title>Genome sequence of the ubiquitous hydrocarbon-degrading marine bacterium Alcanivorax borkumensis.</title>
        <authorList>
            <person name="Schneiker S."/>
            <person name="Martins dos Santos V.A.P."/>
            <person name="Bartels D."/>
            <person name="Bekel T."/>
            <person name="Brecht M."/>
            <person name="Buhrmester J."/>
            <person name="Chernikova T.N."/>
            <person name="Denaro R."/>
            <person name="Ferrer M."/>
            <person name="Gertler C."/>
            <person name="Goesmann A."/>
            <person name="Golyshina O.V."/>
            <person name="Kaminski F."/>
            <person name="Khachane A.N."/>
            <person name="Lang S."/>
            <person name="Linke B."/>
            <person name="McHardy A.C."/>
            <person name="Meyer F."/>
            <person name="Nechitaylo T."/>
            <person name="Puehler A."/>
            <person name="Regenhardt D."/>
            <person name="Rupp O."/>
            <person name="Sabirova J.S."/>
            <person name="Selbitschka W."/>
            <person name="Yakimov M.M."/>
            <person name="Timmis K.N."/>
            <person name="Vorhoelter F.-J."/>
            <person name="Weidner S."/>
            <person name="Kaiser O."/>
            <person name="Golyshin P.N."/>
        </authorList>
    </citation>
    <scope>NUCLEOTIDE SEQUENCE [LARGE SCALE GENOMIC DNA]</scope>
    <source>
        <strain>ATCC 700651 / DSM 11573 / NCIMB 13689 / SK2</strain>
    </source>
</reference>
<accession>Q0VSS1</accession>
<organism>
    <name type="scientific">Alcanivorax borkumensis (strain ATCC 700651 / DSM 11573 / NCIMB 13689 / SK2)</name>
    <dbReference type="NCBI Taxonomy" id="393595"/>
    <lineage>
        <taxon>Bacteria</taxon>
        <taxon>Pseudomonadati</taxon>
        <taxon>Pseudomonadota</taxon>
        <taxon>Gammaproteobacteria</taxon>
        <taxon>Oceanospirillales</taxon>
        <taxon>Alcanivoracaceae</taxon>
        <taxon>Alcanivorax</taxon>
    </lineage>
</organism>
<comment type="function">
    <text evidence="2">One of the essential components for the initiation of protein synthesis. Protects formylmethionyl-tRNA from spontaneous hydrolysis and promotes its binding to the 30S ribosomal subunits. Also involved in the hydrolysis of GTP during the formation of the 70S ribosomal complex.</text>
</comment>
<comment type="subcellular location">
    <subcellularLocation>
        <location evidence="2">Cytoplasm</location>
    </subcellularLocation>
</comment>
<comment type="similarity">
    <text evidence="2">Belongs to the TRAFAC class translation factor GTPase superfamily. Classic translation factor GTPase family. IF-2 subfamily.</text>
</comment>
<sequence length="898" mass="98533">MAETTVKKLADIVGTPVEKLLTQMKDAGLPHGDASEVVSDEQKQQLLAHLRKSHGAEDEGSGKKITLKRKSTSTIKTTGAAGKSKTVNVEVRKKRTYMKRDVVEAEEREEAERLAAEEAARIAEEEKRAAQEAAKRAADDEAARLKEDEARAKAEQERKAAGEKAAEEKSKRVSVPKVSATKKPAKEETPEEKAKREEAERKQREADEAKRKQEAEARKKAEEEAARRTAEEAARIAAELEQRGEQEEKKPAVEDDKGSSIVNAAQEASYQREERQSRRRRRKPKVAGVVHGKMKSSMNKQHGFKTPTEKKIYEVEVPETITVGDLAQRMNIKAKSLIKSLMKMGEMATVNQPIDQETAFLLVEEMGHKPVASKGQEELLEDHLAADLVTRDSVDSEHRAPVVTIMGHVDHGKTSLLDYIRKAKVASGEAGGITQHIGAYHVEHEKGMITFLDTPGHAAFTAMRARGAKATDIVVIVVAADDGVMPQTEEAINHAKASGAPIIIAVNKIDKEQADPDRVRNELATKDVIPEEWGGEYQFINVSAHSGEGVDDLLDAILLQSELLELQAQASGSATGVVIESRIEKGRGTVASILVQGGELQIGDMLLAGAHFGRVRAMVDENGKAIKKAGPSIPVEVLGLNGAPEAGEQIQVVTDERKAREVAEFRQERDRELKLKRQQASKLENLFENMGSAETKTVNIVLKTDVRGSLEALTSALNDLGTDEVKVNLVSSGVGAINESDVNLAMTSEGVLLGFNVRADSKAKRVCEQEGIDLRYYSVIYELIDDVKQAMSGLLAPEKREEILGVAQVRDVFRSSKFGAVAGCMVVEGTLYRNRPIRVLRDDVVVFEGELESLRRFKDDVPEVRNGMECGIAVKSYNDVKEGDKIEVFEVKEVARFL</sequence>
<evidence type="ECO:0000250" key="1"/>
<evidence type="ECO:0000255" key="2">
    <source>
        <dbReference type="HAMAP-Rule" id="MF_00100"/>
    </source>
</evidence>
<evidence type="ECO:0000256" key="3">
    <source>
        <dbReference type="SAM" id="MobiDB-lite"/>
    </source>
</evidence>
<proteinExistence type="inferred from homology"/>
<protein>
    <recommendedName>
        <fullName evidence="2">Translation initiation factor IF-2</fullName>
    </recommendedName>
</protein>
<keyword id="KW-0963">Cytoplasm</keyword>
<keyword id="KW-0342">GTP-binding</keyword>
<keyword id="KW-0396">Initiation factor</keyword>
<keyword id="KW-0547">Nucleotide-binding</keyword>
<keyword id="KW-0648">Protein biosynthesis</keyword>
<keyword id="KW-1185">Reference proteome</keyword>
<gene>
    <name evidence="2" type="primary">infB</name>
    <name type="ordered locus">ABO_0329</name>
</gene>
<name>IF2_ALCBS</name>